<evidence type="ECO:0000250" key="1">
    <source>
        <dbReference type="UniProtKB" id="P15436"/>
    </source>
</evidence>
<evidence type="ECO:0000256" key="2">
    <source>
        <dbReference type="SAM" id="MobiDB-lite"/>
    </source>
</evidence>
<evidence type="ECO:0000269" key="3">
    <source>
    </source>
</evidence>
<evidence type="ECO:0000269" key="4">
    <source>
    </source>
</evidence>
<evidence type="ECO:0000269" key="5">
    <source>
    </source>
</evidence>
<evidence type="ECO:0000269" key="6">
    <source>
    </source>
</evidence>
<evidence type="ECO:0000269" key="7">
    <source>
    </source>
</evidence>
<evidence type="ECO:0000269" key="8">
    <source>
    </source>
</evidence>
<evidence type="ECO:0000269" key="9">
    <source>
    </source>
</evidence>
<evidence type="ECO:0000305" key="10"/>
<evidence type="ECO:0007829" key="11">
    <source>
        <dbReference type="PDB" id="4M8O"/>
    </source>
</evidence>
<evidence type="ECO:0007829" key="12">
    <source>
        <dbReference type="PDB" id="6G0A"/>
    </source>
</evidence>
<evidence type="ECO:0007829" key="13">
    <source>
        <dbReference type="PDB" id="6H1V"/>
    </source>
</evidence>
<evidence type="ECO:0007829" key="14">
    <source>
        <dbReference type="PDB" id="6QIB"/>
    </source>
</evidence>
<evidence type="ECO:0007829" key="15">
    <source>
        <dbReference type="PDB" id="6WJV"/>
    </source>
</evidence>
<evidence type="ECO:0007829" key="16">
    <source>
        <dbReference type="PDB" id="7PMK"/>
    </source>
</evidence>
<evidence type="ECO:0007829" key="17">
    <source>
        <dbReference type="PDB" id="7R3X"/>
    </source>
</evidence>
<evidence type="ECO:0007829" key="18">
    <source>
        <dbReference type="PDB" id="7R3Y"/>
    </source>
</evidence>
<evidence type="ECO:0007829" key="19">
    <source>
        <dbReference type="PDB" id="8B6K"/>
    </source>
</evidence>
<evidence type="ECO:0007829" key="20">
    <source>
        <dbReference type="PDB" id="8B77"/>
    </source>
</evidence>
<evidence type="ECO:0007829" key="21">
    <source>
        <dbReference type="PDB" id="8B7E"/>
    </source>
</evidence>
<evidence type="ECO:0007829" key="22">
    <source>
        <dbReference type="PDB" id="9B8R"/>
    </source>
</evidence>
<proteinExistence type="evidence at protein level"/>
<reference key="1">
    <citation type="journal article" date="1990" name="Cell">
        <title>A third essential DNA polymerase in S. cerevisiae.</title>
        <authorList>
            <person name="Morrison A."/>
            <person name="Araki H."/>
            <person name="Clark A.B."/>
            <person name="Hamatake R.K."/>
            <person name="Sugino A."/>
        </authorList>
    </citation>
    <scope>NUCLEOTIDE SEQUENCE [GENOMIC DNA]</scope>
    <scope>PROTEIN SEQUENCE OF 1214-1221</scope>
    <scope>DOMAIN</scope>
</reference>
<reference key="2">
    <citation type="journal article" date="1997" name="Nature">
        <title>The nucleotide sequence of Saccharomyces cerevisiae chromosome XIV and its evolutionary implications.</title>
        <authorList>
            <person name="Philippsen P."/>
            <person name="Kleine K."/>
            <person name="Poehlmann R."/>
            <person name="Duesterhoeft A."/>
            <person name="Hamberg K."/>
            <person name="Hegemann J.H."/>
            <person name="Obermaier B."/>
            <person name="Urrestarazu L.A."/>
            <person name="Aert R."/>
            <person name="Albermann K."/>
            <person name="Altmann R."/>
            <person name="Andre B."/>
            <person name="Baladron V."/>
            <person name="Ballesta J.P.G."/>
            <person name="Becam A.-M."/>
            <person name="Beinhauer J.D."/>
            <person name="Boskovic J."/>
            <person name="Buitrago M.J."/>
            <person name="Bussereau F."/>
            <person name="Coster F."/>
            <person name="Crouzet M."/>
            <person name="D'Angelo M."/>
            <person name="Dal Pero F."/>
            <person name="De Antoni A."/>
            <person name="del Rey F."/>
            <person name="Doignon F."/>
            <person name="Domdey H."/>
            <person name="Dubois E."/>
            <person name="Fiedler T.A."/>
            <person name="Fleig U."/>
            <person name="Floeth M."/>
            <person name="Fritz C."/>
            <person name="Gaillardin C."/>
            <person name="Garcia-Cantalejo J.M."/>
            <person name="Glansdorff N."/>
            <person name="Goffeau A."/>
            <person name="Gueldener U."/>
            <person name="Herbert C.J."/>
            <person name="Heumann K."/>
            <person name="Heuss-Neitzel D."/>
            <person name="Hilbert H."/>
            <person name="Hinni K."/>
            <person name="Iraqui Houssaini I."/>
            <person name="Jacquet M."/>
            <person name="Jimenez A."/>
            <person name="Jonniaux J.-L."/>
            <person name="Karpfinger-Hartl L."/>
            <person name="Lanfranchi G."/>
            <person name="Lepingle A."/>
            <person name="Levesque H."/>
            <person name="Lyck R."/>
            <person name="Maftahi M."/>
            <person name="Mallet L."/>
            <person name="Maurer C.T.C."/>
            <person name="Messenguy F."/>
            <person name="Mewes H.-W."/>
            <person name="Moestl D."/>
            <person name="Nasr F."/>
            <person name="Nicaud J.-M."/>
            <person name="Niedenthal R.K."/>
            <person name="Pandolfo D."/>
            <person name="Pierard A."/>
            <person name="Piravandi E."/>
            <person name="Planta R.J."/>
            <person name="Pohl T.M."/>
            <person name="Purnelle B."/>
            <person name="Rebischung C."/>
            <person name="Remacha M.A."/>
            <person name="Revuelta J.L."/>
            <person name="Rinke M."/>
            <person name="Saiz J.E."/>
            <person name="Sartorello F."/>
            <person name="Scherens B."/>
            <person name="Sen-Gupta M."/>
            <person name="Soler-Mira A."/>
            <person name="Urbanus J.H.M."/>
            <person name="Valle G."/>
            <person name="Van Dyck L."/>
            <person name="Verhasselt P."/>
            <person name="Vierendeels F."/>
            <person name="Vissers S."/>
            <person name="Voet M."/>
            <person name="Volckaert G."/>
            <person name="Wach A."/>
            <person name="Wambutt R."/>
            <person name="Wedler H."/>
            <person name="Zollner A."/>
            <person name="Hani J."/>
        </authorList>
    </citation>
    <scope>NUCLEOTIDE SEQUENCE [LARGE SCALE GENOMIC DNA]</scope>
    <source>
        <strain>ATCC 204508 / S288c</strain>
    </source>
</reference>
<reference key="3">
    <citation type="journal article" date="2014" name="G3 (Bethesda)">
        <title>The reference genome sequence of Saccharomyces cerevisiae: Then and now.</title>
        <authorList>
            <person name="Engel S.R."/>
            <person name="Dietrich F.S."/>
            <person name="Fisk D.G."/>
            <person name="Binkley G."/>
            <person name="Balakrishnan R."/>
            <person name="Costanzo M.C."/>
            <person name="Dwight S.S."/>
            <person name="Hitz B.C."/>
            <person name="Karra K."/>
            <person name="Nash R.S."/>
            <person name="Weng S."/>
            <person name="Wong E.D."/>
            <person name="Lloyd P."/>
            <person name="Skrzypek M.S."/>
            <person name="Miyasato S.R."/>
            <person name="Simison M."/>
            <person name="Cherry J.M."/>
        </authorList>
    </citation>
    <scope>GENOME REANNOTATION</scope>
    <source>
        <strain>ATCC 204508 / S288c</strain>
    </source>
</reference>
<reference key="4">
    <citation type="journal article" date="1996" name="Yeast">
        <title>The sequence of a 24,152 bp segment from the left arm of chromosome XIV from Saccharomyces cerevisiae between the BNI1 and the POL2 genes.</title>
        <authorList>
            <person name="Sen-Gupta M."/>
            <person name="Lyck R."/>
            <person name="Fleig U."/>
            <person name="Niedenthal R.K."/>
            <person name="Hegemann J.H."/>
        </authorList>
    </citation>
    <scope>NUCLEOTIDE SEQUENCE [GENOMIC DNA] OF 1-2221</scope>
    <source>
        <strain>ATCC 96604 / S288c / FY1679</strain>
    </source>
</reference>
<reference key="5">
    <citation type="journal article" date="1992" name="EMBO J.">
        <title>DNA polymerase II, the probable homolog of mammalian DNA polymerase epsilon, replicates chromosomal DNA in the yeast Saccharomyces cerevisiae.</title>
        <authorList>
            <person name="Araki H."/>
            <person name="Ropp P.A."/>
            <person name="Johnson A.L."/>
            <person name="Johnston L.H."/>
            <person name="Morrison A."/>
            <person name="Sugino A."/>
        </authorList>
    </citation>
    <scope>FUNCTION</scope>
    <scope>MUTAGENESIS OF MET-644 AND PRO-710</scope>
</reference>
<reference key="6">
    <citation type="journal article" date="2000" name="Nucleic Acids Res.">
        <title>Structure and function of the fourth subunit (Dpb4p) of DNA polymerase epsilon in Saccharomyces cerevisiae.</title>
        <authorList>
            <person name="Ohya T."/>
            <person name="Maki S."/>
            <person name="Kawasaki Y."/>
            <person name="Sugino A."/>
        </authorList>
    </citation>
    <scope>SUBUNIT</scope>
</reference>
<reference key="7">
    <citation type="journal article" date="2002" name="J. Biol. Chem.">
        <title>Fidelity of DNA polymerase epsilon holoenzyme from budding yeast Saccharomyces cerevisiae.</title>
        <authorList>
            <person name="Shimizu K."/>
            <person name="Hashimoto K."/>
            <person name="Kirchner J.M."/>
            <person name="Nakai W."/>
            <person name="Nishikawa H."/>
            <person name="Resnick M.A."/>
            <person name="Sugino A."/>
        </authorList>
    </citation>
    <scope>FUNCTION</scope>
    <scope>CATALYTIC ACTIVITY</scope>
</reference>
<reference key="8">
    <citation type="journal article" date="2003" name="J. Biol. Chem.">
        <title>The quaternary structure of DNA polymerase epsilon from Saccharomyces cerevisiae.</title>
        <authorList>
            <person name="Chilkova O."/>
            <person name="Jonsson B.-H."/>
            <person name="Johansson E."/>
        </authorList>
    </citation>
    <scope>COMPOSITION OF THE DNA POLYMERASE EPSILON COMPLEX</scope>
</reference>
<reference key="9">
    <citation type="journal article" date="2003" name="Nature">
        <title>Global analysis of protein expression in yeast.</title>
        <authorList>
            <person name="Ghaemmaghami S."/>
            <person name="Huh W.-K."/>
            <person name="Bower K."/>
            <person name="Howson R.W."/>
            <person name="Belle A."/>
            <person name="Dephoure N."/>
            <person name="O'Shea E.K."/>
            <person name="Weissman J.S."/>
        </authorList>
    </citation>
    <scope>LEVEL OF PROTEIN EXPRESSION [LARGE SCALE ANALYSIS]</scope>
</reference>
<reference key="10">
    <citation type="journal article" date="2012" name="Nat. Chem. Biol.">
        <title>Eukaryotic DNA polymerases require an iron-sulfur cluster for the formation of active complexes.</title>
        <authorList>
            <person name="Netz D.J."/>
            <person name="Stith C.M."/>
            <person name="Stumpfig M."/>
            <person name="Kopf G."/>
            <person name="Vogel D."/>
            <person name="Genau H.M."/>
            <person name="Stodola J.L."/>
            <person name="Lill R."/>
            <person name="Burgers P.M."/>
            <person name="Pierik A.J."/>
        </authorList>
    </citation>
    <scope>CATALYTIC ACTIVITY</scope>
    <scope>COFACTOR</scope>
    <scope>IRON-SULFUR-BINDING</scope>
</reference>
<reference key="11">
    <citation type="journal article" date="2019" name="Nat. Commun.">
        <title>Roles for DNA polymerase delta in initiating and terminating leading strand DNA replication.</title>
        <authorList>
            <person name="Zhou Z.X."/>
            <person name="Lujan S.A."/>
            <person name="Burkholder A.B."/>
            <person name="Garbacz M.A."/>
            <person name="Kunkel T.A."/>
        </authorList>
    </citation>
    <scope>FUNCTION</scope>
    <scope>MUTAGENESIS OF MET-644</scope>
</reference>
<organism>
    <name type="scientific">Saccharomyces cerevisiae (strain ATCC 204508 / S288c)</name>
    <name type="common">Baker's yeast</name>
    <dbReference type="NCBI Taxonomy" id="559292"/>
    <lineage>
        <taxon>Eukaryota</taxon>
        <taxon>Fungi</taxon>
        <taxon>Dikarya</taxon>
        <taxon>Ascomycota</taxon>
        <taxon>Saccharomycotina</taxon>
        <taxon>Saccharomycetes</taxon>
        <taxon>Saccharomycetales</taxon>
        <taxon>Saccharomycetaceae</taxon>
        <taxon>Saccharomyces</taxon>
    </lineage>
</organism>
<name>DPOE_YEAST</name>
<sequence length="2222" mass="255671">MMFGKKKNNGGSSTARYSAGNKYNTLSNNYALSAQQLLNASKIDDIDSMMGFERYVPPQYNGRFDAKDIDQIPGRVGWLTNMHATLVSQETLSSGSNGGGNSNDGERVTTNQGISGVDFYFLDEEGGSFKSTVVYDPYFFIACNDESRVNDVEELVKKYLESCLKSLQIIRKEDLTMDNHLLGLQKTLIKLSFVNSNQLFEARKLLRPILQDNANNNVQRNIYNVAANGSEKVDAKHLIEDIREYDVPYHVRVSIDKDIRVGKWYKVTQQGFIEDTRKIAFADPVVMAFDIETTKPPLKFPDSAVDQIMMISYMIDGEGFLITNREIISEDIEDFEYTPKPEYPGFFTIFNENDEVALLQRFFEHIRDVRPTVISTFNGDFFDWPFIHNRSKIHGLDMFDEIGFAPDAEGEYKSSYCSHMDCFRWVKRDSYLPQGSQGLKAVTQSKLGYNPIELDPELMTPYAFEKPQHLSEYSVSDAVATYYLYMKYVHPFIFSLCTIIPLNPDETLRKGTGTLCEMLLMVQAYQHNILLPNKHTDPIERFYDGHLLESETYVGGHVESLEAGVFRSDLKNEFKIDPSAIDELLQELPEALKFSVEVENKSSVDKVTNFEEIKNQITQKLLELKENNIRNELPLIYHVDVASMYPNIMTTNRLQPDSIKAERDCASCDFNRPGKTCARKLKWAWRGEFFPSKMDEYNMIKRALQNETFPNKNKFSKKKVLTFDELSYADQVIHIKKRLTEYSRKVYHRVKVSEIVEREAIVCQRENPFYVDTVKSFRDRRYEFKGLAKTWKGNLSKIDPSDKHARDEAKKMIVLYDSLQLAHKVILNSFYGYVMRKGSRWYSMEMAGITCLTGATIIQMARALVERVGRPLELDTDGIWCILPKSFPETYFFTLENGKKLYLSYPCSMLNYRVHQKFTNHQYQELKDPLNYIYETHSENTIFFEVDGPYKAMILPSSKEEGKGIKKRYAVFNEDGSLAELKGFELKRRGELQLIKNFQSDIFKVFLEGDTLEGCYSAVASVCNRWLDVLDSHGLMLEDEDLVSLICENRSMSKTLKEYEGQKSTSITTARRLGDFLGEDMVKDKGLQCKYIISSKPFNAPVTERAIPVAIFSADIPIKRSFLRRWTLDPSLEDLDIRTIIDWGYYRERLGSAIQKIITIPAALQGVSNPVPRVEHPDWLKRKIATKEDKFKQTSLTKFFSKTKNVPTMGKIKDIEDLFEPTVEEDNAKIKIARTTKKKAVSKRKRNQLTNEEDPLVLPSEIPSMDEDYVGWLNYQKIKWKIQARDRKRRDQLFGNTNSSRERSALGSMIRKQAESYANSTWEVLQYKDSGEPGVLEVFVTINGKVQNITFHIPKTIYMKFKSQTMPLQKIKNCLIEKSSASLPNNPKTSNPAGGQLFKITLPESVFLEEKENCTSIFNDENVLGVFEGTITPHQRAIMDLGASVTFRSKAMGALGKGIQQGFEMKDLSMAENERYLSGFSMDIGYLLHFPTSIGYEFFSLFKSWGDTITILVLKPSNQAQEINASSLGQIYKQMFEKKKGKIETYSYLVDIKEDINFEFVYFTDISKLYRRLSQETTKLKEERGLQFLLLLQSPFITKLLGTIRLLNQMPIVKLSLNEVLLPQLNWQPTLLKKLVNHVLSSGSWISHLIKLSQYSNIPICNLRLDSMDYIIDVLYARKLKKENIVLWWNEKAPLPDHGGIQNDFDLNTSWIMNDSEFPKINNSGVYDNVVLDVGVDNLTVNTILTSALINDAEGSDLVNNNMGIDDKDAVINSPSEFVHDAFSNDALNVLRGMLKEWWDEALKENSTADLLVNSLASWVQNPNAKLFDGLLRYHVHNLTKKALLQLVNEFSALGSTIVYADRNQILIKTNKYSPENCYAYSQYMMKAVRTNPMFSYLDLNIKRYWDLLIWMDKFNFSGLACIEIEEKENQDYTAVSQWQLKKFLSPIYQPEFEDWMMIILDSMLKTKQSYLKLNSGTQRPTQIVNVKKQDKEDSVENSLNGFSHLFSKPLMKRVKKLFKNQQEFILDPQYEADYVIPVLPGSHLNVKNPLLELVKSLCHVMLLSKSTILEIRTLRKELLKIFELREFAKVAEFKDPSLSLVVPDFLCEYCFFISDIDFCKAAPESIFSCVRCHKAFNQVLLQEHLIQKLRSDIESYLIQDLRCSRCHKVKRDYMSAHCPCAGAWEGTLPRESIVQKLNVFKQVAKYYGFDILLSCIADLTI</sequence>
<dbReference type="EC" id="2.7.7.7" evidence="8"/>
<dbReference type="EC" id="3.1.11.-" evidence="4"/>
<dbReference type="EMBL" id="M60416">
    <property type="protein sequence ID" value="AAA88711.1"/>
    <property type="molecule type" value="Genomic_DNA"/>
</dbReference>
<dbReference type="EMBL" id="X92494">
    <property type="protein sequence ID" value="CAA63235.1"/>
    <property type="molecule type" value="Genomic_DNA"/>
</dbReference>
<dbReference type="EMBL" id="Z71538">
    <property type="protein sequence ID" value="CAA96169.1"/>
    <property type="molecule type" value="Genomic_DNA"/>
</dbReference>
<dbReference type="EMBL" id="BK006947">
    <property type="protein sequence ID" value="DAA10297.1"/>
    <property type="molecule type" value="Genomic_DNA"/>
</dbReference>
<dbReference type="PIR" id="A36028">
    <property type="entry name" value="A36028"/>
</dbReference>
<dbReference type="RefSeq" id="NP_014137.1">
    <property type="nucleotide sequence ID" value="NM_001183100.1"/>
</dbReference>
<dbReference type="PDB" id="4M8O">
    <property type="method" value="X-ray"/>
    <property type="resolution" value="2.20 A"/>
    <property type="chains" value="A=1-1228"/>
</dbReference>
<dbReference type="PDB" id="4PTF">
    <property type="method" value="X-ray"/>
    <property type="resolution" value="2.81 A"/>
    <property type="chains" value="A=1-1187"/>
</dbReference>
<dbReference type="PDB" id="5OKI">
    <property type="method" value="X-ray"/>
    <property type="resolution" value="4.50 A"/>
    <property type="chains" value="A/B=1-524"/>
</dbReference>
<dbReference type="PDB" id="6FWK">
    <property type="method" value="X-ray"/>
    <property type="resolution" value="2.50 A"/>
    <property type="chains" value="A/B=1-1186"/>
</dbReference>
<dbReference type="PDB" id="6G0A">
    <property type="method" value="X-ray"/>
    <property type="resolution" value="2.62 A"/>
    <property type="chains" value="A=1-1186"/>
</dbReference>
<dbReference type="PDB" id="6H1V">
    <property type="method" value="X-ray"/>
    <property type="resolution" value="2.70 A"/>
    <property type="chains" value="A=1-1187"/>
</dbReference>
<dbReference type="PDB" id="6HV8">
    <property type="method" value="EM"/>
    <property type="resolution" value="4.40 A"/>
    <property type="chains" value="A=1308-2221"/>
</dbReference>
<dbReference type="PDB" id="6HV9">
    <property type="method" value="EM"/>
    <property type="resolution" value="4.98 A"/>
    <property type="chains" value="A=1308-2221"/>
</dbReference>
<dbReference type="PDB" id="6I8A">
    <property type="method" value="X-ray"/>
    <property type="resolution" value="2.65 A"/>
    <property type="chains" value="A/B=1-1185"/>
</dbReference>
<dbReference type="PDB" id="6QIB">
    <property type="method" value="X-ray"/>
    <property type="resolution" value="2.80 A"/>
    <property type="chains" value="A=1-1187"/>
</dbReference>
<dbReference type="PDB" id="6S1C">
    <property type="method" value="X-ray"/>
    <property type="resolution" value="6.10 A"/>
    <property type="chains" value="A/E=1-524"/>
</dbReference>
<dbReference type="PDB" id="6S2E">
    <property type="method" value="EM"/>
    <property type="resolution" value="4.20 A"/>
    <property type="chains" value="A=1-1192"/>
</dbReference>
<dbReference type="PDB" id="6S2F">
    <property type="method" value="EM"/>
    <property type="resolution" value="5.80 A"/>
    <property type="chains" value="A=1-1192"/>
</dbReference>
<dbReference type="PDB" id="6WJV">
    <property type="method" value="EM"/>
    <property type="resolution" value="3.50 A"/>
    <property type="chains" value="A=1-2222"/>
</dbReference>
<dbReference type="PDB" id="7PMK">
    <property type="method" value="EM"/>
    <property type="resolution" value="3.20 A"/>
    <property type="chains" value="Q=1-2222"/>
</dbReference>
<dbReference type="PDB" id="7PMN">
    <property type="method" value="EM"/>
    <property type="resolution" value="3.20 A"/>
    <property type="chains" value="Q=1-2222"/>
</dbReference>
<dbReference type="PDB" id="7QHS">
    <property type="method" value="EM"/>
    <property type="resolution" value="3.30 A"/>
    <property type="chains" value="G=1-2222"/>
</dbReference>
<dbReference type="PDB" id="7R3X">
    <property type="method" value="X-ray"/>
    <property type="resolution" value="2.46 A"/>
    <property type="chains" value="A=1-1185"/>
</dbReference>
<dbReference type="PDB" id="7R3Y">
    <property type="method" value="X-ray"/>
    <property type="resolution" value="2.60 A"/>
    <property type="chains" value="A/B=1-1186"/>
</dbReference>
<dbReference type="PDB" id="7Z13">
    <property type="method" value="EM"/>
    <property type="resolution" value="3.40 A"/>
    <property type="chains" value="N/Q=1-2222"/>
</dbReference>
<dbReference type="PDB" id="8B67">
    <property type="method" value="X-ray"/>
    <property type="resolution" value="2.60 A"/>
    <property type="chains" value="A=1-1186"/>
</dbReference>
<dbReference type="PDB" id="8B6K">
    <property type="method" value="X-ray"/>
    <property type="resolution" value="2.50 A"/>
    <property type="chains" value="A/B=1-1186"/>
</dbReference>
<dbReference type="PDB" id="8B76">
    <property type="method" value="X-ray"/>
    <property type="resolution" value="2.60 A"/>
    <property type="chains" value="A/B=1-1186"/>
</dbReference>
<dbReference type="PDB" id="8B77">
    <property type="method" value="X-ray"/>
    <property type="resolution" value="2.70 A"/>
    <property type="chains" value="A=1-1186"/>
</dbReference>
<dbReference type="PDB" id="8B79">
    <property type="method" value="X-ray"/>
    <property type="resolution" value="2.65 A"/>
    <property type="chains" value="A/B=1-1186"/>
</dbReference>
<dbReference type="PDB" id="8B7E">
    <property type="method" value="X-ray"/>
    <property type="resolution" value="2.60 A"/>
    <property type="chains" value="A/B=1-1186"/>
</dbReference>
<dbReference type="PDB" id="8KG6">
    <property type="method" value="EM"/>
    <property type="resolution" value="3.07 A"/>
    <property type="chains" value="M=1-2222"/>
</dbReference>
<dbReference type="PDB" id="8KG8">
    <property type="method" value="EM"/>
    <property type="resolution" value="4.23 A"/>
    <property type="chains" value="M=1-2222"/>
</dbReference>
<dbReference type="PDB" id="8KG9">
    <property type="method" value="EM"/>
    <property type="resolution" value="4.52 A"/>
    <property type="chains" value="M=1-2222"/>
</dbReference>
<dbReference type="PDB" id="8P5E">
    <property type="method" value="EM"/>
    <property type="resolution" value="3.90 A"/>
    <property type="chains" value="G=1-2222"/>
</dbReference>
<dbReference type="PDB" id="8P62">
    <property type="method" value="EM"/>
    <property type="resolution" value="3.90 A"/>
    <property type="chains" value="G=1-2222"/>
</dbReference>
<dbReference type="PDB" id="8P63">
    <property type="method" value="EM"/>
    <property type="resolution" value="3.70 A"/>
    <property type="chains" value="G=1-2222"/>
</dbReference>
<dbReference type="PDB" id="8TW9">
    <property type="method" value="EM"/>
    <property type="resolution" value="3.60 A"/>
    <property type="chains" value="E=1-2222"/>
</dbReference>
<dbReference type="PDB" id="8TWA">
    <property type="method" value="EM"/>
    <property type="resolution" value="4.10 A"/>
    <property type="chains" value="E=1-2222"/>
</dbReference>
<dbReference type="PDB" id="8XGC">
    <property type="method" value="EM"/>
    <property type="resolution" value="3.70 A"/>
    <property type="chains" value="8=1-2222"/>
</dbReference>
<dbReference type="PDB" id="9B8R">
    <property type="method" value="EM"/>
    <property type="resolution" value="3.50 A"/>
    <property type="chains" value="E=27-1186"/>
</dbReference>
<dbReference type="PDBsum" id="4M8O"/>
<dbReference type="PDBsum" id="4PTF"/>
<dbReference type="PDBsum" id="5OKI"/>
<dbReference type="PDBsum" id="6FWK"/>
<dbReference type="PDBsum" id="6G0A"/>
<dbReference type="PDBsum" id="6H1V"/>
<dbReference type="PDBsum" id="6HV8"/>
<dbReference type="PDBsum" id="6HV9"/>
<dbReference type="PDBsum" id="6I8A"/>
<dbReference type="PDBsum" id="6QIB"/>
<dbReference type="PDBsum" id="6S1C"/>
<dbReference type="PDBsum" id="6S2E"/>
<dbReference type="PDBsum" id="6S2F"/>
<dbReference type="PDBsum" id="6WJV"/>
<dbReference type="PDBsum" id="7PMK"/>
<dbReference type="PDBsum" id="7PMN"/>
<dbReference type="PDBsum" id="7QHS"/>
<dbReference type="PDBsum" id="7R3X"/>
<dbReference type="PDBsum" id="7R3Y"/>
<dbReference type="PDBsum" id="7Z13"/>
<dbReference type="PDBsum" id="8B67"/>
<dbReference type="PDBsum" id="8B6K"/>
<dbReference type="PDBsum" id="8B76"/>
<dbReference type="PDBsum" id="8B77"/>
<dbReference type="PDBsum" id="8B79"/>
<dbReference type="PDBsum" id="8B7E"/>
<dbReference type="PDBsum" id="8KG6"/>
<dbReference type="PDBsum" id="8KG8"/>
<dbReference type="PDBsum" id="8KG9"/>
<dbReference type="PDBsum" id="8P5E"/>
<dbReference type="PDBsum" id="8P62"/>
<dbReference type="PDBsum" id="8P63"/>
<dbReference type="PDBsum" id="8TW9"/>
<dbReference type="PDBsum" id="8TWA"/>
<dbReference type="PDBsum" id="8XGC"/>
<dbReference type="PDBsum" id="9B8R"/>
<dbReference type="EMDB" id="EMD-0287"/>
<dbReference type="EMDB" id="EMD-0288"/>
<dbReference type="EMDB" id="EMD-10088"/>
<dbReference type="EMDB" id="EMD-10089"/>
<dbReference type="EMDB" id="EMD-13537"/>
<dbReference type="EMDB" id="EMD-13539"/>
<dbReference type="EMDB" id="EMD-13978"/>
<dbReference type="EMDB" id="EMD-14439"/>
<dbReference type="EMDB" id="EMD-17449"/>
<dbReference type="EMDB" id="EMD-17458"/>
<dbReference type="EMDB" id="EMD-17459"/>
<dbReference type="EMDB" id="EMD-21701"/>
<dbReference type="EMDB" id="EMD-37211"/>
<dbReference type="EMDB" id="EMD-37213"/>
<dbReference type="EMDB" id="EMD-37215"/>
<dbReference type="EMDB" id="EMD-38317"/>
<dbReference type="EMDB" id="EMD-41663"/>
<dbReference type="EMDB" id="EMD-41664"/>
<dbReference type="SMR" id="P21951"/>
<dbReference type="BioGRID" id="35577">
    <property type="interactions" value="639"/>
</dbReference>
<dbReference type="ComplexPortal" id="CPX-2110">
    <property type="entry name" value="DNA polymerase epsilon complex"/>
</dbReference>
<dbReference type="DIP" id="DIP-2532N"/>
<dbReference type="FunCoup" id="P21951">
    <property type="interactions" value="904"/>
</dbReference>
<dbReference type="IntAct" id="P21951">
    <property type="interactions" value="27"/>
</dbReference>
<dbReference type="MINT" id="P21951"/>
<dbReference type="STRING" id="4932.YNL262W"/>
<dbReference type="iPTMnet" id="P21951"/>
<dbReference type="PaxDb" id="4932-YNL262W"/>
<dbReference type="PeptideAtlas" id="P21951"/>
<dbReference type="EnsemblFungi" id="YNL262W_mRNA">
    <property type="protein sequence ID" value="YNL262W"/>
    <property type="gene ID" value="YNL262W"/>
</dbReference>
<dbReference type="GeneID" id="855459"/>
<dbReference type="KEGG" id="sce:YNL262W"/>
<dbReference type="AGR" id="SGD:S000005206"/>
<dbReference type="SGD" id="S000005206">
    <property type="gene designation" value="POL2"/>
</dbReference>
<dbReference type="VEuPathDB" id="FungiDB:YNL262W"/>
<dbReference type="eggNOG" id="KOG1798">
    <property type="taxonomic scope" value="Eukaryota"/>
</dbReference>
<dbReference type="GeneTree" id="ENSGT00390000010194"/>
<dbReference type="HOGENOM" id="CLU_000556_0_1_1"/>
<dbReference type="InParanoid" id="P21951"/>
<dbReference type="OMA" id="MLDQCRY"/>
<dbReference type="OrthoDB" id="10060449at2759"/>
<dbReference type="BioCyc" id="YEAST:G3O-33258-MONOMER"/>
<dbReference type="Reactome" id="R-SCE-5656169">
    <property type="pathway name" value="Termination of translesion DNA synthesis"/>
</dbReference>
<dbReference type="Reactome" id="R-SCE-6782135">
    <property type="pathway name" value="Dual incision in TC-NER"/>
</dbReference>
<dbReference type="Reactome" id="R-SCE-68952">
    <property type="pathway name" value="DNA replication initiation"/>
</dbReference>
<dbReference type="Reactome" id="R-SCE-68962">
    <property type="pathway name" value="Activation of the pre-replicative complex"/>
</dbReference>
<dbReference type="BioGRID-ORCS" id="855459">
    <property type="hits" value="2 hits in 10 CRISPR screens"/>
</dbReference>
<dbReference type="EvolutionaryTrace" id="P21951"/>
<dbReference type="PRO" id="PR:P21951"/>
<dbReference type="Proteomes" id="UP000002311">
    <property type="component" value="Chromosome XIV"/>
</dbReference>
<dbReference type="RNAct" id="P21951">
    <property type="molecule type" value="protein"/>
</dbReference>
<dbReference type="GO" id="GO:0008622">
    <property type="term" value="C:epsilon DNA polymerase complex"/>
    <property type="evidence" value="ECO:0000314"/>
    <property type="project" value="SGD"/>
</dbReference>
<dbReference type="GO" id="GO:0043596">
    <property type="term" value="C:nuclear replication fork"/>
    <property type="evidence" value="ECO:0000314"/>
    <property type="project" value="ComplexPortal"/>
</dbReference>
<dbReference type="GO" id="GO:0005634">
    <property type="term" value="C:nucleus"/>
    <property type="evidence" value="ECO:0000303"/>
    <property type="project" value="ComplexPortal"/>
</dbReference>
<dbReference type="GO" id="GO:0005657">
    <property type="term" value="C:replication fork"/>
    <property type="evidence" value="ECO:0000314"/>
    <property type="project" value="SGD"/>
</dbReference>
<dbReference type="GO" id="GO:0051539">
    <property type="term" value="F:4 iron, 4 sulfur cluster binding"/>
    <property type="evidence" value="ECO:0007669"/>
    <property type="project" value="UniProtKB-KW"/>
</dbReference>
<dbReference type="GO" id="GO:0003677">
    <property type="term" value="F:DNA binding"/>
    <property type="evidence" value="ECO:0000318"/>
    <property type="project" value="GO_Central"/>
</dbReference>
<dbReference type="GO" id="GO:0003887">
    <property type="term" value="F:DNA-directed DNA polymerase activity"/>
    <property type="evidence" value="ECO:0000314"/>
    <property type="project" value="SGD"/>
</dbReference>
<dbReference type="GO" id="GO:0003690">
    <property type="term" value="F:double-stranded DNA binding"/>
    <property type="evidence" value="ECO:0000314"/>
    <property type="project" value="SGD"/>
</dbReference>
<dbReference type="GO" id="GO:0003729">
    <property type="term" value="F:mRNA binding"/>
    <property type="evidence" value="ECO:0007005"/>
    <property type="project" value="SGD"/>
</dbReference>
<dbReference type="GO" id="GO:0000166">
    <property type="term" value="F:nucleotide binding"/>
    <property type="evidence" value="ECO:0007669"/>
    <property type="project" value="InterPro"/>
</dbReference>
<dbReference type="GO" id="GO:0008310">
    <property type="term" value="F:single-stranded DNA 3'-5' DNA exonuclease activity"/>
    <property type="evidence" value="ECO:0000315"/>
    <property type="project" value="SGD"/>
</dbReference>
<dbReference type="GO" id="GO:0003697">
    <property type="term" value="F:single-stranded DNA binding"/>
    <property type="evidence" value="ECO:0000314"/>
    <property type="project" value="SGD"/>
</dbReference>
<dbReference type="GO" id="GO:0032183">
    <property type="term" value="F:SUMO binding"/>
    <property type="evidence" value="ECO:0000314"/>
    <property type="project" value="SGD"/>
</dbReference>
<dbReference type="GO" id="GO:0008270">
    <property type="term" value="F:zinc ion binding"/>
    <property type="evidence" value="ECO:0007669"/>
    <property type="project" value="UniProtKB-KW"/>
</dbReference>
<dbReference type="GO" id="GO:0006284">
    <property type="term" value="P:base-excision repair"/>
    <property type="evidence" value="ECO:0000315"/>
    <property type="project" value="SGD"/>
</dbReference>
<dbReference type="GO" id="GO:0006287">
    <property type="term" value="P:base-excision repair, gap-filling"/>
    <property type="evidence" value="ECO:0000318"/>
    <property type="project" value="GO_Central"/>
</dbReference>
<dbReference type="GO" id="GO:0045004">
    <property type="term" value="P:DNA replication proofreading"/>
    <property type="evidence" value="ECO:0000315"/>
    <property type="project" value="SGD"/>
</dbReference>
<dbReference type="GO" id="GO:0006261">
    <property type="term" value="P:DNA-templated DNA replication"/>
    <property type="evidence" value="ECO:0000314"/>
    <property type="project" value="SGD"/>
</dbReference>
<dbReference type="GO" id="GO:0006302">
    <property type="term" value="P:double-strand break repair"/>
    <property type="evidence" value="ECO:0000315"/>
    <property type="project" value="SGD"/>
</dbReference>
<dbReference type="GO" id="GO:0006303">
    <property type="term" value="P:double-strand break repair via nonhomologous end joining"/>
    <property type="evidence" value="ECO:0000315"/>
    <property type="project" value="SGD"/>
</dbReference>
<dbReference type="GO" id="GO:0042276">
    <property type="term" value="P:error-prone translesion synthesis"/>
    <property type="evidence" value="ECO:0000314"/>
    <property type="project" value="SGD"/>
</dbReference>
<dbReference type="GO" id="GO:0035822">
    <property type="term" value="P:gene conversion"/>
    <property type="evidence" value="ECO:0000315"/>
    <property type="project" value="SGD"/>
</dbReference>
<dbReference type="GO" id="GO:0006272">
    <property type="term" value="P:leading strand elongation"/>
    <property type="evidence" value="ECO:0000315"/>
    <property type="project" value="SGD"/>
</dbReference>
<dbReference type="GO" id="GO:0000278">
    <property type="term" value="P:mitotic cell cycle"/>
    <property type="evidence" value="ECO:0000318"/>
    <property type="project" value="GO_Central"/>
</dbReference>
<dbReference type="GO" id="GO:0033314">
    <property type="term" value="P:mitotic DNA replication checkpoint signaling"/>
    <property type="evidence" value="ECO:0000315"/>
    <property type="project" value="SGD"/>
</dbReference>
<dbReference type="GO" id="GO:0031573">
    <property type="term" value="P:mitotic intra-S DNA damage checkpoint signaling"/>
    <property type="evidence" value="ECO:0000315"/>
    <property type="project" value="SGD"/>
</dbReference>
<dbReference type="GO" id="GO:0007064">
    <property type="term" value="P:mitotic sister chromatid cohesion"/>
    <property type="evidence" value="ECO:0000315"/>
    <property type="project" value="SGD"/>
</dbReference>
<dbReference type="GO" id="GO:0006297">
    <property type="term" value="P:nucleotide-excision repair, DNA gap filling"/>
    <property type="evidence" value="ECO:0000315"/>
    <property type="project" value="SGD"/>
</dbReference>
<dbReference type="CDD" id="cd05779">
    <property type="entry name" value="DNA_polB_epsilon_exo"/>
    <property type="match status" value="1"/>
</dbReference>
<dbReference type="CDD" id="cd05535">
    <property type="entry name" value="POLBc_epsilon"/>
    <property type="match status" value="1"/>
</dbReference>
<dbReference type="FunFam" id="1.10.132.60:FF:000002">
    <property type="entry name" value="DNA polymerase epsilon catalytic subunit"/>
    <property type="match status" value="1"/>
</dbReference>
<dbReference type="FunFam" id="1.10.287.690:FF:000005">
    <property type="entry name" value="DNA polymerase epsilon catalytic subunit"/>
    <property type="match status" value="1"/>
</dbReference>
<dbReference type="FunFam" id="3.30.342.10:FF:000017">
    <property type="entry name" value="DNA polymerase epsilon catalytic subunit"/>
    <property type="match status" value="1"/>
</dbReference>
<dbReference type="FunFam" id="3.30.420.10:FF:000010">
    <property type="entry name" value="DNA polymerase epsilon catalytic subunit"/>
    <property type="match status" value="1"/>
</dbReference>
<dbReference type="FunFam" id="3.90.1600.10:FF:000006">
    <property type="entry name" value="DNA polymerase epsilon catalytic subunit"/>
    <property type="match status" value="1"/>
</dbReference>
<dbReference type="Gene3D" id="1.10.132.60">
    <property type="entry name" value="DNA polymerase family B, C-terminal domain"/>
    <property type="match status" value="1"/>
</dbReference>
<dbReference type="Gene3D" id="3.30.342.10">
    <property type="entry name" value="DNA Polymerase, chain B, domain 1"/>
    <property type="match status" value="1"/>
</dbReference>
<dbReference type="Gene3D" id="3.90.1600.10">
    <property type="entry name" value="Palm domain of DNA polymerase"/>
    <property type="match status" value="1"/>
</dbReference>
<dbReference type="Gene3D" id="3.30.420.10">
    <property type="entry name" value="Ribonuclease H-like superfamily/Ribonuclease H"/>
    <property type="match status" value="1"/>
</dbReference>
<dbReference type="InterPro" id="IPR006172">
    <property type="entry name" value="DNA-dir_DNA_pol_B"/>
</dbReference>
<dbReference type="InterPro" id="IPR006133">
    <property type="entry name" value="DNA-dir_DNA_pol_B_exonuc"/>
</dbReference>
<dbReference type="InterPro" id="IPR043502">
    <property type="entry name" value="DNA/RNA_pol_sf"/>
</dbReference>
<dbReference type="InterPro" id="IPR042087">
    <property type="entry name" value="DNA_pol_B_thumb"/>
</dbReference>
<dbReference type="InterPro" id="IPR013697">
    <property type="entry name" value="DNA_pol_e_suA_C"/>
</dbReference>
<dbReference type="InterPro" id="IPR023211">
    <property type="entry name" value="DNA_pol_palm_dom_sf"/>
</dbReference>
<dbReference type="InterPro" id="IPR029703">
    <property type="entry name" value="POL2"/>
</dbReference>
<dbReference type="InterPro" id="IPR055191">
    <property type="entry name" value="POL2_thumb"/>
</dbReference>
<dbReference type="InterPro" id="IPR012337">
    <property type="entry name" value="RNaseH-like_sf"/>
</dbReference>
<dbReference type="InterPro" id="IPR036397">
    <property type="entry name" value="RNaseH_sf"/>
</dbReference>
<dbReference type="InterPro" id="IPR054475">
    <property type="entry name" value="Znf-DPOE"/>
</dbReference>
<dbReference type="PANTHER" id="PTHR10670">
    <property type="entry name" value="DNA POLYMERASE EPSILON CATALYTIC SUBUNIT A"/>
    <property type="match status" value="1"/>
</dbReference>
<dbReference type="PANTHER" id="PTHR10670:SF0">
    <property type="entry name" value="DNA POLYMERASE EPSILON CATALYTIC SUBUNIT A"/>
    <property type="match status" value="1"/>
</dbReference>
<dbReference type="Pfam" id="PF03104">
    <property type="entry name" value="DNA_pol_B_exo1"/>
    <property type="match status" value="1"/>
</dbReference>
<dbReference type="Pfam" id="PF08490">
    <property type="entry name" value="DUF1744"/>
    <property type="match status" value="1"/>
</dbReference>
<dbReference type="Pfam" id="PF22634">
    <property type="entry name" value="POL2_thumb"/>
    <property type="match status" value="1"/>
</dbReference>
<dbReference type="Pfam" id="PF22912">
    <property type="entry name" value="zf-DPOE"/>
    <property type="match status" value="1"/>
</dbReference>
<dbReference type="SMART" id="SM01159">
    <property type="entry name" value="DUF1744"/>
    <property type="match status" value="1"/>
</dbReference>
<dbReference type="SMART" id="SM00486">
    <property type="entry name" value="POLBc"/>
    <property type="match status" value="1"/>
</dbReference>
<dbReference type="SUPFAM" id="SSF56672">
    <property type="entry name" value="DNA/RNA polymerases"/>
    <property type="match status" value="1"/>
</dbReference>
<dbReference type="SUPFAM" id="SSF53098">
    <property type="entry name" value="Ribonuclease H-like"/>
    <property type="match status" value="1"/>
</dbReference>
<protein>
    <recommendedName>
        <fullName>DNA polymerase epsilon catalytic subunit A</fullName>
        <ecNumber evidence="8">2.7.7.7</ecNumber>
    </recommendedName>
    <alternativeName>
        <fullName evidence="10">3'-5' exodeoxyribonuclease</fullName>
        <ecNumber evidence="4">3.1.11.-</ecNumber>
    </alternativeName>
    <alternativeName>
        <fullName>DNA polymerase II subunit A</fullName>
    </alternativeName>
</protein>
<keyword id="KW-0002">3D-structure</keyword>
<keyword id="KW-0004">4Fe-4S</keyword>
<keyword id="KW-0903">Direct protein sequencing</keyword>
<keyword id="KW-0235">DNA replication</keyword>
<keyword id="KW-0238">DNA-binding</keyword>
<keyword id="KW-0239">DNA-directed DNA polymerase</keyword>
<keyword id="KW-0378">Hydrolase</keyword>
<keyword id="KW-0408">Iron</keyword>
<keyword id="KW-0411">Iron-sulfur</keyword>
<keyword id="KW-0479">Metal-binding</keyword>
<keyword id="KW-0548">Nucleotidyltransferase</keyword>
<keyword id="KW-0539">Nucleus</keyword>
<keyword id="KW-1185">Reference proteome</keyword>
<keyword id="KW-0808">Transferase</keyword>
<keyword id="KW-0862">Zinc</keyword>
<keyword id="KW-0863">Zinc-finger</keyword>
<comment type="function">
    <text evidence="4 6 9">Catalytic component of the DNA polymerase epsilon complex which participates in chromosomal DNA replication (PubMed:1537345). Required during synthesis of the leading DNA strands at the replication fork, binds at/or near replication origins and moves along DNA with the replication fork (PubMed:31488849). Has 3'-5' proofreading exonuclease activity that corrects errors arising during DNA replication (PubMed:12124389).</text>
</comment>
<comment type="catalytic activity">
    <reaction evidence="8">
        <text>DNA(n) + a 2'-deoxyribonucleoside 5'-triphosphate = DNA(n+1) + diphosphate</text>
        <dbReference type="Rhea" id="RHEA:22508"/>
        <dbReference type="Rhea" id="RHEA-COMP:17339"/>
        <dbReference type="Rhea" id="RHEA-COMP:17340"/>
        <dbReference type="ChEBI" id="CHEBI:33019"/>
        <dbReference type="ChEBI" id="CHEBI:61560"/>
        <dbReference type="ChEBI" id="CHEBI:173112"/>
        <dbReference type="EC" id="2.7.7.7"/>
    </reaction>
</comment>
<comment type="cofactor">
    <cofactor evidence="8">
        <name>[4Fe-4S] cluster</name>
        <dbReference type="ChEBI" id="CHEBI:49883"/>
    </cofactor>
    <text evidence="8">Binds 1 [4Fe-4S] cluster.</text>
</comment>
<comment type="subunit">
    <text evidence="3">DNA polymerase epsilon is a heterotetramer consisting of POL2, DPB2, DPB3 and DPB4.</text>
</comment>
<comment type="interaction">
    <interactant intactId="EBI-6140">
        <id>P21951</id>
    </interactant>
    <interactant intactId="EBI-6071">
        <id>P24482</id>
        <label>DPB2</label>
    </interactant>
    <organismsDiffer>false</organismsDiffer>
    <experiments>8</experiments>
</comment>
<comment type="subcellular location">
    <subcellularLocation>
        <location>Nucleus</location>
    </subcellularLocation>
</comment>
<comment type="domain">
    <text evidence="7">The DNA polymerase activity domain resides in the N-terminal half of the protein, while the C-terminus is necessary for complexing subunits B and C.</text>
</comment>
<comment type="domain">
    <text evidence="1">The CysA-type zinc finger is required for PCNA-binding.</text>
</comment>
<comment type="domain">
    <text evidence="1">The CysB motif binds 1 4Fe-4S cluster and is required for the formation of polymerase complexes.</text>
</comment>
<comment type="miscellaneous">
    <text>In eukaryotes there are five DNA polymerases: alpha, beta, gamma, delta, and epsilon which are responsible for different reactions of DNA synthesis.</text>
</comment>
<comment type="miscellaneous">
    <text evidence="5">Present with 1970 molecules/cell in log phase SD medium.</text>
</comment>
<comment type="similarity">
    <text evidence="10">Belongs to the DNA polymerase type-B family.</text>
</comment>
<feature type="chain" id="PRO_0000046467" description="DNA polymerase epsilon catalytic subunit A">
    <location>
        <begin position="1"/>
        <end position="2222"/>
    </location>
</feature>
<feature type="zinc finger region" description="CysA-type" evidence="1">
    <location>
        <begin position="2108"/>
        <end position="2133"/>
    </location>
</feature>
<feature type="region of interest" description="Disordered" evidence="2">
    <location>
        <begin position="90"/>
        <end position="110"/>
    </location>
</feature>
<feature type="short sequence motif" description="CysB motif" evidence="1">
    <location>
        <begin position="2164"/>
        <end position="2181"/>
    </location>
</feature>
<feature type="binding site" evidence="1">
    <location>
        <position position="2108"/>
    </location>
    <ligand>
        <name>Zn(2+)</name>
        <dbReference type="ChEBI" id="CHEBI:29105"/>
    </ligand>
</feature>
<feature type="binding site" evidence="1">
    <location>
        <position position="2111"/>
    </location>
    <ligand>
        <name>Zn(2+)</name>
        <dbReference type="ChEBI" id="CHEBI:29105"/>
    </ligand>
</feature>
<feature type="binding site" evidence="1">
    <location>
        <position position="2130"/>
    </location>
    <ligand>
        <name>Zn(2+)</name>
        <dbReference type="ChEBI" id="CHEBI:29105"/>
    </ligand>
</feature>
<feature type="binding site" evidence="1">
    <location>
        <position position="2133"/>
    </location>
    <ligand>
        <name>Zn(2+)</name>
        <dbReference type="ChEBI" id="CHEBI:29105"/>
    </ligand>
</feature>
<feature type="binding site" evidence="1">
    <location>
        <position position="2164"/>
    </location>
    <ligand>
        <name>[4Fe-4S] cluster</name>
        <dbReference type="ChEBI" id="CHEBI:49883"/>
    </ligand>
</feature>
<feature type="binding site" evidence="1">
    <location>
        <position position="2167"/>
    </location>
    <ligand>
        <name>[4Fe-4S] cluster</name>
        <dbReference type="ChEBI" id="CHEBI:49883"/>
    </ligand>
</feature>
<feature type="binding site" evidence="1">
    <location>
        <position position="2179"/>
    </location>
    <ligand>
        <name>[4Fe-4S] cluster</name>
        <dbReference type="ChEBI" id="CHEBI:49883"/>
    </ligand>
</feature>
<feature type="binding site" evidence="1">
    <location>
        <position position="2181"/>
    </location>
    <ligand>
        <name>[4Fe-4S] cluster</name>
        <dbReference type="ChEBI" id="CHEBI:49883"/>
    </ligand>
</feature>
<feature type="mutagenesis site" description="Increases rates of C-to-A transversion substitutions." evidence="9">
    <original>M</original>
    <variation>G</variation>
    <location>
        <position position="644"/>
    </location>
</feature>
<feature type="mutagenesis site" description="In POL2-9; temperature-sensitive mutant." evidence="6">
    <original>M</original>
    <variation>I</variation>
    <location>
        <position position="644"/>
    </location>
</feature>
<feature type="mutagenesis site" description="In POL2-18; temperature-sensitive mutant." evidence="6">
    <original>P</original>
    <variation>S</variation>
    <location>
        <position position="710"/>
    </location>
</feature>
<feature type="helix" evidence="11">
    <location>
        <begin position="33"/>
        <end position="49"/>
    </location>
</feature>
<feature type="turn" evidence="11">
    <location>
        <begin position="67"/>
        <end position="71"/>
    </location>
</feature>
<feature type="strand" evidence="11">
    <location>
        <begin position="72"/>
        <end position="87"/>
    </location>
</feature>
<feature type="strand" evidence="11">
    <location>
        <begin position="114"/>
        <end position="123"/>
    </location>
</feature>
<feature type="strand" evidence="12">
    <location>
        <begin position="124"/>
        <end position="126"/>
    </location>
</feature>
<feature type="strand" evidence="11">
    <location>
        <begin position="128"/>
        <end position="134"/>
    </location>
</feature>
<feature type="strand" evidence="11">
    <location>
        <begin position="138"/>
        <end position="144"/>
    </location>
</feature>
<feature type="helix" evidence="11">
    <location>
        <begin position="146"/>
        <end position="148"/>
    </location>
</feature>
<feature type="helix" evidence="11">
    <location>
        <begin position="149"/>
        <end position="159"/>
    </location>
</feature>
<feature type="turn" evidence="11">
    <location>
        <begin position="160"/>
        <end position="163"/>
    </location>
</feature>
<feature type="strand" evidence="11">
    <location>
        <begin position="166"/>
        <end position="173"/>
    </location>
</feature>
<feature type="strand" evidence="20">
    <location>
        <begin position="175"/>
        <end position="177"/>
    </location>
</feature>
<feature type="helix" evidence="11">
    <location>
        <begin position="180"/>
        <end position="182"/>
    </location>
</feature>
<feature type="strand" evidence="11">
    <location>
        <begin position="186"/>
        <end position="192"/>
    </location>
</feature>
<feature type="helix" evidence="11">
    <location>
        <begin position="196"/>
        <end position="215"/>
    </location>
</feature>
<feature type="turn" evidence="11">
    <location>
        <begin position="222"/>
        <end position="224"/>
    </location>
</feature>
<feature type="helix" evidence="11">
    <location>
        <begin position="235"/>
        <end position="238"/>
    </location>
</feature>
<feature type="strand" evidence="11">
    <location>
        <begin position="239"/>
        <end position="244"/>
    </location>
</feature>
<feature type="helix" evidence="11">
    <location>
        <begin position="249"/>
        <end position="257"/>
    </location>
</feature>
<feature type="strand" evidence="11">
    <location>
        <begin position="263"/>
        <end position="268"/>
    </location>
</feature>
<feature type="strand" evidence="11">
    <location>
        <begin position="271"/>
        <end position="274"/>
    </location>
</feature>
<feature type="turn" evidence="18">
    <location>
        <begin position="276"/>
        <end position="278"/>
    </location>
</feature>
<feature type="strand" evidence="11">
    <location>
        <begin position="286"/>
        <end position="293"/>
    </location>
</feature>
<feature type="turn" evidence="11">
    <location>
        <begin position="303"/>
        <end position="305"/>
    </location>
</feature>
<feature type="strand" evidence="11">
    <location>
        <begin position="308"/>
        <end position="315"/>
    </location>
</feature>
<feature type="strand" evidence="11">
    <location>
        <begin position="318"/>
        <end position="324"/>
    </location>
</feature>
<feature type="turn" evidence="11">
    <location>
        <begin position="325"/>
        <end position="327"/>
    </location>
</feature>
<feature type="strand" evidence="17">
    <location>
        <begin position="328"/>
        <end position="330"/>
    </location>
</feature>
<feature type="strand" evidence="11">
    <location>
        <begin position="346"/>
        <end position="354"/>
    </location>
</feature>
<feature type="helix" evidence="11">
    <location>
        <begin position="355"/>
        <end position="369"/>
    </location>
</feature>
<feature type="strand" evidence="11">
    <location>
        <begin position="372"/>
        <end position="378"/>
    </location>
</feature>
<feature type="turn" evidence="11">
    <location>
        <begin position="379"/>
        <end position="382"/>
    </location>
</feature>
<feature type="helix" evidence="11">
    <location>
        <begin position="383"/>
        <end position="393"/>
    </location>
</feature>
<feature type="strand" evidence="15">
    <location>
        <begin position="394"/>
        <end position="396"/>
    </location>
</feature>
<feature type="helix" evidence="11">
    <location>
        <begin position="398"/>
        <end position="402"/>
    </location>
</feature>
<feature type="strand" evidence="19">
    <location>
        <begin position="403"/>
        <end position="406"/>
    </location>
</feature>
<feature type="strand" evidence="11">
    <location>
        <begin position="415"/>
        <end position="421"/>
    </location>
</feature>
<feature type="helix" evidence="11">
    <location>
        <begin position="422"/>
        <end position="429"/>
    </location>
</feature>
<feature type="helix" evidence="11">
    <location>
        <begin position="434"/>
        <end position="436"/>
    </location>
</feature>
<feature type="helix" evidence="11">
    <location>
        <begin position="439"/>
        <end position="447"/>
    </location>
</feature>
<feature type="helix" evidence="11">
    <location>
        <begin position="456"/>
        <end position="458"/>
    </location>
</feature>
<feature type="helix" evidence="11">
    <location>
        <begin position="459"/>
        <end position="465"/>
    </location>
</feature>
<feature type="helix" evidence="11">
    <location>
        <begin position="467"/>
        <end position="487"/>
    </location>
</feature>
<feature type="helix" evidence="11">
    <location>
        <begin position="489"/>
        <end position="497"/>
    </location>
</feature>
<feature type="strand" evidence="11">
    <location>
        <begin position="500"/>
        <end position="502"/>
    </location>
</feature>
<feature type="helix" evidence="11">
    <location>
        <begin position="504"/>
        <end position="509"/>
    </location>
</feature>
<feature type="helix" evidence="11">
    <location>
        <begin position="512"/>
        <end position="526"/>
    </location>
</feature>
<feature type="strand" evidence="11">
    <location>
        <begin position="546"/>
        <end position="553"/>
    </location>
</feature>
<feature type="strand" evidence="11">
    <location>
        <begin position="558"/>
        <end position="560"/>
    </location>
</feature>
<feature type="strand" evidence="11">
    <location>
        <begin position="564"/>
        <end position="567"/>
    </location>
</feature>
<feature type="strand" evidence="11">
    <location>
        <begin position="572"/>
        <end position="575"/>
    </location>
</feature>
<feature type="helix" evidence="11">
    <location>
        <begin position="578"/>
        <end position="597"/>
    </location>
</feature>
<feature type="turn" evidence="21">
    <location>
        <begin position="598"/>
        <end position="600"/>
    </location>
</feature>
<feature type="helix" evidence="11">
    <location>
        <begin position="604"/>
        <end position="606"/>
    </location>
</feature>
<feature type="strand" evidence="11">
    <location>
        <begin position="607"/>
        <end position="609"/>
    </location>
</feature>
<feature type="helix" evidence="11">
    <location>
        <begin position="610"/>
        <end position="626"/>
    </location>
</feature>
<feature type="strand" evidence="11">
    <location>
        <begin position="629"/>
        <end position="632"/>
    </location>
</feature>
<feature type="strand" evidence="11">
    <location>
        <begin position="634"/>
        <end position="641"/>
    </location>
</feature>
<feature type="helix" evidence="11">
    <location>
        <begin position="644"/>
        <end position="652"/>
    </location>
</feature>
<feature type="helix" evidence="11">
    <location>
        <begin position="656"/>
        <end position="658"/>
    </location>
</feature>
<feature type="strand" evidence="11">
    <location>
        <begin position="659"/>
        <end position="662"/>
    </location>
</feature>
<feature type="strand" evidence="11">
    <location>
        <begin position="664"/>
        <end position="666"/>
    </location>
</feature>
<feature type="strand" evidence="14">
    <location>
        <begin position="672"/>
        <end position="674"/>
    </location>
</feature>
<feature type="strand" evidence="11">
    <location>
        <begin position="678"/>
        <end position="689"/>
    </location>
</feature>
<feature type="helix" evidence="11">
    <location>
        <begin position="694"/>
        <end position="705"/>
    </location>
</feature>
<feature type="strand" evidence="11">
    <location>
        <begin position="708"/>
        <end position="710"/>
    </location>
</feature>
<feature type="strand" evidence="17">
    <location>
        <begin position="714"/>
        <end position="717"/>
    </location>
</feature>
<feature type="strand" evidence="11">
    <location>
        <begin position="720"/>
        <end position="722"/>
    </location>
</feature>
<feature type="helix" evidence="11">
    <location>
        <begin position="723"/>
        <end position="725"/>
    </location>
</feature>
<feature type="helix" evidence="11">
    <location>
        <begin position="728"/>
        <end position="747"/>
    </location>
</feature>
<feature type="strand" evidence="11">
    <location>
        <begin position="752"/>
        <end position="766"/>
    </location>
</feature>
<feature type="helix" evidence="11">
    <location>
        <begin position="769"/>
        <end position="797"/>
    </location>
</feature>
<feature type="turn" evidence="11">
    <location>
        <begin position="798"/>
        <end position="800"/>
    </location>
</feature>
<feature type="strand" evidence="11">
    <location>
        <begin position="801"/>
        <end position="803"/>
    </location>
</feature>
<feature type="helix" evidence="11">
    <location>
        <begin position="808"/>
        <end position="832"/>
    </location>
</feature>
<feature type="helix" evidence="11">
    <location>
        <begin position="833"/>
        <end position="835"/>
    </location>
</feature>
<feature type="strand" evidence="22">
    <location>
        <begin position="839"/>
        <end position="841"/>
    </location>
</feature>
<feature type="helix" evidence="11">
    <location>
        <begin position="844"/>
        <end position="868"/>
    </location>
</feature>
<feature type="strand" evidence="11">
    <location>
        <begin position="869"/>
        <end position="875"/>
    </location>
</feature>
<feature type="strand" evidence="11">
    <location>
        <begin position="878"/>
        <end position="884"/>
    </location>
</feature>
<feature type="strand" evidence="11">
    <location>
        <begin position="890"/>
        <end position="895"/>
    </location>
</feature>
<feature type="turn" evidence="13">
    <location>
        <begin position="896"/>
        <end position="898"/>
    </location>
</feature>
<feature type="strand" evidence="11">
    <location>
        <begin position="900"/>
        <end position="904"/>
    </location>
</feature>
<feature type="helix" evidence="11">
    <location>
        <begin position="905"/>
        <end position="918"/>
    </location>
</feature>
<feature type="strand" evidence="11">
    <location>
        <begin position="920"/>
        <end position="928"/>
    </location>
</feature>
<feature type="turn" evidence="11">
    <location>
        <begin position="929"/>
        <end position="932"/>
    </location>
</feature>
<feature type="strand" evidence="11">
    <location>
        <begin position="933"/>
        <end position="939"/>
    </location>
</feature>
<feature type="strand" evidence="11">
    <location>
        <begin position="944"/>
        <end position="955"/>
    </location>
</feature>
<feature type="strand" evidence="19">
    <location>
        <begin position="959"/>
        <end position="962"/>
    </location>
</feature>
<feature type="strand" evidence="11">
    <location>
        <begin position="969"/>
        <end position="972"/>
    </location>
</feature>
<feature type="strand" evidence="11">
    <location>
        <begin position="978"/>
        <end position="984"/>
    </location>
</feature>
<feature type="turn" evidence="11">
    <location>
        <begin position="985"/>
        <end position="987"/>
    </location>
</feature>
<feature type="strand" evidence="11">
    <location>
        <begin position="988"/>
        <end position="992"/>
    </location>
</feature>
<feature type="helix" evidence="11">
    <location>
        <begin position="993"/>
        <end position="1002"/>
    </location>
</feature>
<feature type="helix" evidence="11">
    <location>
        <begin position="1003"/>
        <end position="1007"/>
    </location>
</feature>
<feature type="strand" evidence="21">
    <location>
        <begin position="1009"/>
        <end position="1011"/>
    </location>
</feature>
<feature type="helix" evidence="11">
    <location>
        <begin position="1012"/>
        <end position="1031"/>
    </location>
</feature>
<feature type="turn" evidence="11">
    <location>
        <begin position="1032"/>
        <end position="1036"/>
    </location>
</feature>
<feature type="helix" evidence="11">
    <location>
        <begin position="1039"/>
        <end position="1046"/>
    </location>
</feature>
<feature type="strand" evidence="11">
    <location>
        <begin position="1048"/>
        <end position="1051"/>
    </location>
</feature>
<feature type="helix" evidence="11">
    <location>
        <begin position="1056"/>
        <end position="1059"/>
    </location>
</feature>
<feature type="helix" evidence="11">
    <location>
        <begin position="1065"/>
        <end position="1077"/>
    </location>
</feature>
<feature type="helix" evidence="11">
    <location>
        <begin position="1079"/>
        <end position="1082"/>
    </location>
</feature>
<feature type="strand" evidence="11">
    <location>
        <begin position="1083"/>
        <end position="1086"/>
    </location>
</feature>
<feature type="strand" evidence="11">
    <location>
        <begin position="1088"/>
        <end position="1095"/>
    </location>
</feature>
<feature type="strand" evidence="20">
    <location>
        <begin position="1097"/>
        <end position="1099"/>
    </location>
</feature>
<feature type="helix" evidence="11">
    <location>
        <begin position="1102"/>
        <end position="1104"/>
    </location>
</feature>
<feature type="strand" evidence="11">
    <location>
        <begin position="1106"/>
        <end position="1108"/>
    </location>
</feature>
<feature type="helix" evidence="11">
    <location>
        <begin position="1109"/>
        <end position="1113"/>
    </location>
</feature>
<feature type="helix" evidence="11">
    <location>
        <begin position="1116"/>
        <end position="1127"/>
    </location>
</feature>
<feature type="helix" evidence="11">
    <location>
        <begin position="1137"/>
        <end position="1140"/>
    </location>
</feature>
<feature type="helix" evidence="11">
    <location>
        <begin position="1143"/>
        <end position="1157"/>
    </location>
</feature>
<feature type="helix" evidence="11">
    <location>
        <begin position="1159"/>
        <end position="1164"/>
    </location>
</feature>
<feature type="strand" evidence="15">
    <location>
        <begin position="1172"/>
        <end position="1174"/>
    </location>
</feature>
<feature type="helix" evidence="11">
    <location>
        <begin position="1178"/>
        <end position="1183"/>
    </location>
</feature>
<feature type="helix" evidence="15">
    <location>
        <begin position="1273"/>
        <end position="1293"/>
    </location>
</feature>
<feature type="helix" evidence="15">
    <location>
        <begin position="1299"/>
        <end position="1301"/>
    </location>
</feature>
<feature type="strand" evidence="15">
    <location>
        <begin position="1302"/>
        <end position="1305"/>
    </location>
</feature>
<feature type="turn" evidence="15">
    <location>
        <begin position="1308"/>
        <end position="1310"/>
    </location>
</feature>
<feature type="helix" evidence="15">
    <location>
        <begin position="1311"/>
        <end position="1315"/>
    </location>
</feature>
<feature type="strand" evidence="15">
    <location>
        <begin position="1319"/>
        <end position="1322"/>
    </location>
</feature>
<feature type="strand" evidence="16">
    <location>
        <begin position="1324"/>
        <end position="1329"/>
    </location>
</feature>
<feature type="strand" evidence="16">
    <location>
        <begin position="1335"/>
        <end position="1342"/>
    </location>
</feature>
<feature type="strand" evidence="16">
    <location>
        <begin position="1345"/>
        <end position="1352"/>
    </location>
</feature>
<feature type="strand" evidence="16">
    <location>
        <begin position="1354"/>
        <end position="1363"/>
    </location>
</feature>
<feature type="turn" evidence="15">
    <location>
        <begin position="1366"/>
        <end position="1370"/>
    </location>
</feature>
<feature type="strand" evidence="16">
    <location>
        <begin position="1376"/>
        <end position="1379"/>
    </location>
</feature>
<feature type="strand" evidence="16">
    <location>
        <begin position="1397"/>
        <end position="1403"/>
    </location>
</feature>
<feature type="helix" evidence="16">
    <location>
        <begin position="1404"/>
        <end position="1411"/>
    </location>
</feature>
<feature type="strand" evidence="16">
    <location>
        <begin position="1419"/>
        <end position="1428"/>
    </location>
</feature>
<feature type="helix" evidence="16">
    <location>
        <begin position="1433"/>
        <end position="1440"/>
    </location>
</feature>
<feature type="strand" evidence="15">
    <location>
        <begin position="1444"/>
        <end position="1447"/>
    </location>
</feature>
<feature type="strand" evidence="15">
    <location>
        <begin position="1452"/>
        <end position="1454"/>
    </location>
</feature>
<feature type="helix" evidence="15">
    <location>
        <begin position="1455"/>
        <end position="1461"/>
    </location>
</feature>
<feature type="helix" evidence="16">
    <location>
        <begin position="1465"/>
        <end position="1467"/>
    </location>
</feature>
<feature type="strand" evidence="16">
    <location>
        <begin position="1483"/>
        <end position="1486"/>
    </location>
</feature>
<feature type="strand" evidence="15">
    <location>
        <begin position="1493"/>
        <end position="1495"/>
    </location>
</feature>
<feature type="strand" evidence="16">
    <location>
        <begin position="1498"/>
        <end position="1503"/>
    </location>
</feature>
<feature type="turn" evidence="15">
    <location>
        <begin position="1504"/>
        <end position="1506"/>
    </location>
</feature>
<feature type="strand" evidence="16">
    <location>
        <begin position="1507"/>
        <end position="1511"/>
    </location>
</feature>
<feature type="helix" evidence="16">
    <location>
        <begin position="1524"/>
        <end position="1538"/>
    </location>
</feature>
<feature type="helix" evidence="16">
    <location>
        <begin position="1540"/>
        <end position="1545"/>
    </location>
</feature>
<feature type="turn" evidence="16">
    <location>
        <begin position="1546"/>
        <end position="1549"/>
    </location>
</feature>
<feature type="strand" evidence="16">
    <location>
        <begin position="1559"/>
        <end position="1561"/>
    </location>
</feature>
<feature type="helix" evidence="16">
    <location>
        <begin position="1571"/>
        <end position="1583"/>
    </location>
</feature>
<feature type="strand" evidence="16">
    <location>
        <begin position="1585"/>
        <end position="1591"/>
    </location>
</feature>
<feature type="strand" evidence="15">
    <location>
        <begin position="1595"/>
        <end position="1597"/>
    </location>
</feature>
<feature type="helix" evidence="16">
    <location>
        <begin position="1599"/>
        <end position="1605"/>
    </location>
</feature>
<feature type="helix" evidence="16">
    <location>
        <begin position="1632"/>
        <end position="1656"/>
    </location>
</feature>
<feature type="turn" evidence="16">
    <location>
        <begin position="1660"/>
        <end position="1662"/>
    </location>
</feature>
<feature type="helix" evidence="16">
    <location>
        <begin position="1668"/>
        <end position="1682"/>
    </location>
</feature>
<feature type="strand" evidence="15">
    <location>
        <begin position="1683"/>
        <end position="1686"/>
    </location>
</feature>
<feature type="strand" evidence="16">
    <location>
        <begin position="1691"/>
        <end position="1695"/>
    </location>
</feature>
<feature type="helix" evidence="16">
    <location>
        <begin position="1700"/>
        <end position="1703"/>
    </location>
</feature>
<feature type="helix" evidence="16">
    <location>
        <begin position="1707"/>
        <end position="1714"/>
    </location>
</feature>
<feature type="strand" evidence="16">
    <location>
        <begin position="1725"/>
        <end position="1727"/>
    </location>
</feature>
<feature type="strand" evidence="16">
    <location>
        <begin position="1731"/>
        <end position="1735"/>
    </location>
</feature>
<feature type="helix" evidence="16">
    <location>
        <begin position="1739"/>
        <end position="1746"/>
    </location>
</feature>
<feature type="strand" evidence="16">
    <location>
        <begin position="1780"/>
        <end position="1782"/>
    </location>
</feature>
<feature type="helix" evidence="16">
    <location>
        <begin position="1785"/>
        <end position="1803"/>
    </location>
</feature>
<feature type="helix" evidence="16">
    <location>
        <begin position="1807"/>
        <end position="1819"/>
    </location>
</feature>
<feature type="strand" evidence="15">
    <location>
        <begin position="1825"/>
        <end position="1827"/>
    </location>
</feature>
<feature type="helix" evidence="16">
    <location>
        <begin position="1830"/>
        <end position="1853"/>
    </location>
</feature>
<feature type="strand" evidence="16">
    <location>
        <begin position="1857"/>
        <end position="1862"/>
    </location>
</feature>
<feature type="strand" evidence="16">
    <location>
        <begin position="1865"/>
        <end position="1869"/>
    </location>
</feature>
<feature type="helix" evidence="16">
    <location>
        <begin position="1875"/>
        <end position="1890"/>
    </location>
</feature>
<feature type="helix" evidence="16">
    <location>
        <begin position="1893"/>
        <end position="1895"/>
    </location>
</feature>
<feature type="strand" evidence="16">
    <location>
        <begin position="1901"/>
        <end position="1913"/>
    </location>
</feature>
<feature type="strand" evidence="16">
    <location>
        <begin position="1916"/>
        <end position="1922"/>
    </location>
</feature>
<feature type="strand" evidence="16">
    <location>
        <begin position="1935"/>
        <end position="1939"/>
    </location>
</feature>
<feature type="helix" evidence="16">
    <location>
        <begin position="1940"/>
        <end position="1943"/>
    </location>
</feature>
<feature type="turn" evidence="16">
    <location>
        <begin position="1947"/>
        <end position="1949"/>
    </location>
</feature>
<feature type="helix" evidence="16">
    <location>
        <begin position="1950"/>
        <end position="1973"/>
    </location>
</feature>
<feature type="turn" evidence="16">
    <location>
        <begin position="1999"/>
        <end position="2002"/>
    </location>
</feature>
<feature type="helix" evidence="16">
    <location>
        <begin position="2003"/>
        <end position="2006"/>
    </location>
</feature>
<feature type="helix" evidence="16">
    <location>
        <begin position="2008"/>
        <end position="2025"/>
    </location>
</feature>
<feature type="turn" evidence="16">
    <location>
        <begin position="2029"/>
        <end position="2031"/>
    </location>
</feature>
<feature type="helix" evidence="16">
    <location>
        <begin position="2032"/>
        <end position="2035"/>
    </location>
</feature>
<feature type="turn" evidence="15">
    <location>
        <begin position="2046"/>
        <end position="2048"/>
    </location>
</feature>
<feature type="helix" evidence="16">
    <location>
        <begin position="2050"/>
        <end position="2063"/>
    </location>
</feature>
<feature type="helix" evidence="16">
    <location>
        <begin position="2069"/>
        <end position="2080"/>
    </location>
</feature>
<feature type="helix" evidence="16">
    <location>
        <begin position="2081"/>
        <end position="2083"/>
    </location>
</feature>
<feature type="turn" evidence="16">
    <location>
        <begin position="2090"/>
        <end position="2092"/>
    </location>
</feature>
<feature type="strand" evidence="16">
    <location>
        <begin position="2102"/>
        <end position="2108"/>
    </location>
</feature>
<feature type="turn" evidence="16">
    <location>
        <begin position="2109"/>
        <end position="2112"/>
    </location>
</feature>
<feature type="strand" evidence="16">
    <location>
        <begin position="2113"/>
        <end position="2118"/>
    </location>
</feature>
<feature type="turn" evidence="16">
    <location>
        <begin position="2119"/>
        <end position="2121"/>
    </location>
</feature>
<feature type="helix" evidence="16">
    <location>
        <begin position="2124"/>
        <end position="2128"/>
    </location>
</feature>
<feature type="strand" evidence="16">
    <location>
        <begin position="2131"/>
        <end position="2133"/>
    </location>
</feature>
<feature type="helix" evidence="16">
    <location>
        <begin position="2139"/>
        <end position="2158"/>
    </location>
</feature>
<feature type="strand" evidence="16">
    <location>
        <begin position="2162"/>
        <end position="2164"/>
    </location>
</feature>
<feature type="turn" evidence="16">
    <location>
        <begin position="2165"/>
        <end position="2167"/>
    </location>
</feature>
<feature type="strand" evidence="16">
    <location>
        <begin position="2173"/>
        <end position="2175"/>
    </location>
</feature>
<feature type="strand" evidence="15">
    <location>
        <begin position="2180"/>
        <end position="2182"/>
    </location>
</feature>
<feature type="strand" evidence="16">
    <location>
        <begin position="2185"/>
        <end position="2189"/>
    </location>
</feature>
<feature type="helix" evidence="16">
    <location>
        <begin position="2191"/>
        <end position="2208"/>
    </location>
</feature>
<feature type="helix" evidence="16">
    <location>
        <begin position="2211"/>
        <end position="2221"/>
    </location>
</feature>
<gene>
    <name type="primary">POL2</name>
    <name type="synonym">DUN2</name>
    <name type="ordered locus">YNL262W</name>
    <name type="ORF">N0825</name>
</gene>
<accession>P21951</accession>
<accession>D6W0T1</accession>